<gene>
    <name type="primary">KCNJ6</name>
</gene>
<accession>Q5NVJ6</accession>
<sequence length="423" mass="48391">MAKLTESMTNVLEGDSMDQDVESPVAIHQPKLPKQARDDLPRHISRDRTKRKIQRYVRKDGKCNVHHGNVRETYRYLTDIFTTLVDLKWRFNLLIFVMVYTVTWLFFGMIWWLIAYIRGDMDHIEDPSWTPCVTNLNGFVSAFLFSIETETTIGYGYRVITDKCPEGIILLLIQSVLGSIVNAFMVGCMFVKISQPKKRAETLVFSTHAVISMRDGKLCLMFRVGDLRNSHIVEASIRAKLIKSKQTSEGEFIPLNQTDINVGYYTGDDRLSLVSPLIISHEINQQSPFWEISKAQLPKEELEIVVILEGMVEATGMTCQARSSYITSEILWGYRFTPVLTLEDGFYEVDYNSFHETYETSTPSLSAKELAELASRAELPLSWSVSSKLNQHAELETEEEEKNLEEQTERNGDVANLENESKV</sequence>
<name>KCNJ6_PONAB</name>
<feature type="chain" id="PRO_0000154945" description="G protein-activated inward rectifier potassium channel 2">
    <location>
        <begin position="1"/>
        <end position="423"/>
    </location>
</feature>
<feature type="topological domain" description="Cytoplasmic" evidence="1">
    <location>
        <begin position="1"/>
        <end position="89"/>
    </location>
</feature>
<feature type="transmembrane region" description="Helical; Name=M1" evidence="1">
    <location>
        <begin position="90"/>
        <end position="114"/>
    </location>
</feature>
<feature type="topological domain" description="Extracellular" evidence="1">
    <location>
        <begin position="115"/>
        <end position="138"/>
    </location>
</feature>
<feature type="intramembrane region" description="Helical; Pore-forming; Name=H5" evidence="1">
    <location>
        <begin position="139"/>
        <end position="150"/>
    </location>
</feature>
<feature type="intramembrane region" description="Pore-forming" evidence="1">
    <location>
        <begin position="151"/>
        <end position="157"/>
    </location>
</feature>
<feature type="topological domain" description="Extracellular" evidence="1">
    <location>
        <begin position="158"/>
        <end position="166"/>
    </location>
</feature>
<feature type="transmembrane region" description="Helical; Name=M2" evidence="1">
    <location>
        <begin position="167"/>
        <end position="188"/>
    </location>
</feature>
<feature type="topological domain" description="Cytoplasmic" evidence="1">
    <location>
        <begin position="189"/>
        <end position="423"/>
    </location>
</feature>
<feature type="region of interest" description="Disordered" evidence="6">
    <location>
        <begin position="390"/>
        <end position="423"/>
    </location>
</feature>
<feature type="short sequence motif" description="Selectivity filter" evidence="1">
    <location>
        <begin position="152"/>
        <end position="157"/>
    </location>
</feature>
<feature type="short sequence motif" description="PDZ-binding">
    <location>
        <begin position="420"/>
        <end position="423"/>
    </location>
</feature>
<feature type="site" description="Role in the control of polyamine-mediated channel gating and in the blocking by intracellular magnesium" evidence="1">
    <location>
        <position position="182"/>
    </location>
</feature>
<feature type="modified residue" description="Phosphoserine" evidence="3">
    <location>
        <position position="16"/>
    </location>
</feature>
<feature type="modified residue" description="Phosphoserine" evidence="3">
    <location>
        <position position="23"/>
    </location>
</feature>
<reference key="1">
    <citation type="submission" date="2004-11" db="EMBL/GenBank/DDBJ databases">
        <authorList>
            <consortium name="The German cDNA consortium"/>
        </authorList>
    </citation>
    <scope>NUCLEOTIDE SEQUENCE [LARGE SCALE MRNA]</scope>
    <source>
        <tissue>Brain cortex</tissue>
    </source>
</reference>
<dbReference type="EMBL" id="CR926032">
    <property type="protein sequence ID" value="CAI29667.1"/>
    <property type="molecule type" value="mRNA"/>
</dbReference>
<dbReference type="RefSeq" id="NP_001127100.1">
    <property type="nucleotide sequence ID" value="NM_001133628.1"/>
</dbReference>
<dbReference type="SMR" id="Q5NVJ6"/>
<dbReference type="FunCoup" id="Q5NVJ6">
    <property type="interactions" value="767"/>
</dbReference>
<dbReference type="STRING" id="9601.ENSPPYP00000012893"/>
<dbReference type="GeneID" id="100174134"/>
<dbReference type="KEGG" id="pon:100174134"/>
<dbReference type="CTD" id="3763"/>
<dbReference type="eggNOG" id="KOG3827">
    <property type="taxonomic scope" value="Eukaryota"/>
</dbReference>
<dbReference type="InParanoid" id="Q5NVJ6"/>
<dbReference type="OrthoDB" id="273257at2759"/>
<dbReference type="Proteomes" id="UP000001595">
    <property type="component" value="Unplaced"/>
</dbReference>
<dbReference type="GO" id="GO:0034702">
    <property type="term" value="C:monoatomic ion channel complex"/>
    <property type="evidence" value="ECO:0007669"/>
    <property type="project" value="UniProtKB-KW"/>
</dbReference>
<dbReference type="GO" id="GO:0005886">
    <property type="term" value="C:plasma membrane"/>
    <property type="evidence" value="ECO:0007669"/>
    <property type="project" value="TreeGrafter"/>
</dbReference>
<dbReference type="GO" id="GO:0015467">
    <property type="term" value="F:G-protein activated inward rectifier potassium channel activity"/>
    <property type="evidence" value="ECO:0000250"/>
    <property type="project" value="UniProtKB"/>
</dbReference>
<dbReference type="GO" id="GO:0005242">
    <property type="term" value="F:inward rectifier potassium channel activity"/>
    <property type="evidence" value="ECO:0000250"/>
    <property type="project" value="UniProtKB"/>
</dbReference>
<dbReference type="GO" id="GO:1990573">
    <property type="term" value="P:potassium ion import across plasma membrane"/>
    <property type="evidence" value="ECO:0007669"/>
    <property type="project" value="TreeGrafter"/>
</dbReference>
<dbReference type="GO" id="GO:0034765">
    <property type="term" value="P:regulation of monoatomic ion transmembrane transport"/>
    <property type="evidence" value="ECO:0007669"/>
    <property type="project" value="TreeGrafter"/>
</dbReference>
<dbReference type="FunFam" id="1.10.287.70:FF:000019">
    <property type="entry name" value="G protein-activated inward rectifier potassium channel 1"/>
    <property type="match status" value="1"/>
</dbReference>
<dbReference type="FunFam" id="2.60.40.1400:FF:000005">
    <property type="entry name" value="G protein-activated inward rectifier potassium channel 2"/>
    <property type="match status" value="1"/>
</dbReference>
<dbReference type="Gene3D" id="1.10.287.70">
    <property type="match status" value="1"/>
</dbReference>
<dbReference type="Gene3D" id="2.60.40.1400">
    <property type="entry name" value="G protein-activated inward rectifier potassium channel 1"/>
    <property type="match status" value="1"/>
</dbReference>
<dbReference type="InterPro" id="IPR014756">
    <property type="entry name" value="Ig_E-set"/>
</dbReference>
<dbReference type="InterPro" id="IPR041647">
    <property type="entry name" value="IRK_C"/>
</dbReference>
<dbReference type="InterPro" id="IPR016449">
    <property type="entry name" value="K_chnl_inward-rec_Kir"/>
</dbReference>
<dbReference type="InterPro" id="IPR003275">
    <property type="entry name" value="K_chnl_inward-rec_Kir3.2"/>
</dbReference>
<dbReference type="InterPro" id="IPR013518">
    <property type="entry name" value="K_chnl_inward-rec_Kir_cyto"/>
</dbReference>
<dbReference type="InterPro" id="IPR040445">
    <property type="entry name" value="Kir_TM"/>
</dbReference>
<dbReference type="PANTHER" id="PTHR11767:SF19">
    <property type="entry name" value="G PROTEIN-ACTIVATED INWARD RECTIFIER POTASSIUM CHANNEL 2"/>
    <property type="match status" value="1"/>
</dbReference>
<dbReference type="PANTHER" id="PTHR11767">
    <property type="entry name" value="INWARD RECTIFIER POTASSIUM CHANNEL"/>
    <property type="match status" value="1"/>
</dbReference>
<dbReference type="Pfam" id="PF01007">
    <property type="entry name" value="IRK"/>
    <property type="match status" value="1"/>
</dbReference>
<dbReference type="Pfam" id="PF17655">
    <property type="entry name" value="IRK_C"/>
    <property type="match status" value="1"/>
</dbReference>
<dbReference type="PIRSF" id="PIRSF005465">
    <property type="entry name" value="GIRK_kir"/>
    <property type="match status" value="1"/>
</dbReference>
<dbReference type="PRINTS" id="PR01328">
    <property type="entry name" value="KIR32CHANNEL"/>
</dbReference>
<dbReference type="PRINTS" id="PR01320">
    <property type="entry name" value="KIRCHANNEL"/>
</dbReference>
<dbReference type="SUPFAM" id="SSF81296">
    <property type="entry name" value="E set domains"/>
    <property type="match status" value="1"/>
</dbReference>
<dbReference type="SUPFAM" id="SSF81324">
    <property type="entry name" value="Voltage-gated potassium channels"/>
    <property type="match status" value="1"/>
</dbReference>
<evidence type="ECO:0000250" key="1"/>
<evidence type="ECO:0000250" key="2">
    <source>
        <dbReference type="UniProtKB" id="P48051"/>
    </source>
</evidence>
<evidence type="ECO:0000250" key="3">
    <source>
        <dbReference type="UniProtKB" id="P48542"/>
    </source>
</evidence>
<evidence type="ECO:0000250" key="4">
    <source>
        <dbReference type="UniProtKB" id="P48550"/>
    </source>
</evidence>
<evidence type="ECO:0000255" key="5"/>
<evidence type="ECO:0000256" key="6">
    <source>
        <dbReference type="SAM" id="MobiDB-lite"/>
    </source>
</evidence>
<evidence type="ECO:0000305" key="7"/>
<keyword id="KW-0407">Ion channel</keyword>
<keyword id="KW-0406">Ion transport</keyword>
<keyword id="KW-0472">Membrane</keyword>
<keyword id="KW-0597">Phosphoprotein</keyword>
<keyword id="KW-0630">Potassium</keyword>
<keyword id="KW-0633">Potassium transport</keyword>
<keyword id="KW-1185">Reference proteome</keyword>
<keyword id="KW-0812">Transmembrane</keyword>
<keyword id="KW-1133">Transmembrane helix</keyword>
<keyword id="KW-0813">Transport</keyword>
<keyword id="KW-0851">Voltage-gated channel</keyword>
<proteinExistence type="evidence at transcript level"/>
<protein>
    <recommendedName>
        <fullName>G protein-activated inward rectifier potassium channel 2</fullName>
        <shortName>GIRK-2</shortName>
    </recommendedName>
    <alternativeName>
        <fullName>Potassium channel, inwardly rectifying subfamily J member 6</fullName>
    </alternativeName>
</protein>
<comment type="function">
    <text evidence="2">Inward rectifier potassium channels are characterized by a greater tendency to allow potassium to flow into the cell rather than out of it. Their voltage dependence is regulated by the concentration of extracellular potassium; as external potassium is raised, the voltage range of the channel opening shifts to more positive voltages. The inward rectification is mainly due to the blockage of outward current by internal magnesium. This potassium channel may be involved in the regulation of insulin secretion by glucose and/or neurotransmitters acting through G-protein-coupled receptors.</text>
</comment>
<comment type="catalytic activity">
    <reaction evidence="2">
        <text>K(+)(in) = K(+)(out)</text>
        <dbReference type="Rhea" id="RHEA:29463"/>
        <dbReference type="ChEBI" id="CHEBI:29103"/>
    </reaction>
</comment>
<comment type="activity regulation">
    <text evidence="4">Activated by phosphatidylinositol 4,5 biphosphate (PtdIns(4,5)P2).</text>
</comment>
<comment type="subunit">
    <text evidence="2 4">Associates with KCNJ3/GIRK1 or KCNJ5/GRIK4 to form a G-protein-activated heteromultimer pore-forming unit. The resulting inward current is much larger. Interacts (via PDZ-binding motif) with SNX27 (via PDZ domain); the interaction is required when endocytosed to prevent degradation in lysosomes and promote recycling to the plasma membrane.</text>
</comment>
<comment type="subcellular location">
    <subcellularLocation>
        <location evidence="5">Membrane</location>
        <topology evidence="5">Multi-pass membrane protein</topology>
    </subcellularLocation>
</comment>
<comment type="similarity">
    <text evidence="7">Belongs to the inward rectifier-type potassium channel (TC 1.A.2.1) family. KCNJ6 subfamily.</text>
</comment>
<organism>
    <name type="scientific">Pongo abelii</name>
    <name type="common">Sumatran orangutan</name>
    <name type="synonym">Pongo pygmaeus abelii</name>
    <dbReference type="NCBI Taxonomy" id="9601"/>
    <lineage>
        <taxon>Eukaryota</taxon>
        <taxon>Metazoa</taxon>
        <taxon>Chordata</taxon>
        <taxon>Craniata</taxon>
        <taxon>Vertebrata</taxon>
        <taxon>Euteleostomi</taxon>
        <taxon>Mammalia</taxon>
        <taxon>Eutheria</taxon>
        <taxon>Euarchontoglires</taxon>
        <taxon>Primates</taxon>
        <taxon>Haplorrhini</taxon>
        <taxon>Catarrhini</taxon>
        <taxon>Hominidae</taxon>
        <taxon>Pongo</taxon>
    </lineage>
</organism>